<proteinExistence type="inferred from homology"/>
<dbReference type="EC" id="3.5.4.5" evidence="1"/>
<dbReference type="EMBL" id="CP000931">
    <property type="protein sequence ID" value="ABZ76348.1"/>
    <property type="molecule type" value="Genomic_DNA"/>
</dbReference>
<dbReference type="RefSeq" id="WP_012276882.1">
    <property type="nucleotide sequence ID" value="NC_010334.1"/>
</dbReference>
<dbReference type="SMR" id="B0TQV3"/>
<dbReference type="STRING" id="458817.Shal_1783"/>
<dbReference type="KEGG" id="shl:Shal_1783"/>
<dbReference type="eggNOG" id="COG0295">
    <property type="taxonomic scope" value="Bacteria"/>
</dbReference>
<dbReference type="HOGENOM" id="CLU_052424_0_0_6"/>
<dbReference type="OrthoDB" id="9795347at2"/>
<dbReference type="Proteomes" id="UP000001317">
    <property type="component" value="Chromosome"/>
</dbReference>
<dbReference type="GO" id="GO:0005829">
    <property type="term" value="C:cytosol"/>
    <property type="evidence" value="ECO:0007669"/>
    <property type="project" value="TreeGrafter"/>
</dbReference>
<dbReference type="GO" id="GO:0004126">
    <property type="term" value="F:cytidine deaminase activity"/>
    <property type="evidence" value="ECO:0007669"/>
    <property type="project" value="UniProtKB-UniRule"/>
</dbReference>
<dbReference type="GO" id="GO:0042802">
    <property type="term" value="F:identical protein binding"/>
    <property type="evidence" value="ECO:0007669"/>
    <property type="project" value="UniProtKB-ARBA"/>
</dbReference>
<dbReference type="GO" id="GO:0008270">
    <property type="term" value="F:zinc ion binding"/>
    <property type="evidence" value="ECO:0007669"/>
    <property type="project" value="UniProtKB-UniRule"/>
</dbReference>
<dbReference type="GO" id="GO:0009972">
    <property type="term" value="P:cytidine deamination"/>
    <property type="evidence" value="ECO:0007669"/>
    <property type="project" value="InterPro"/>
</dbReference>
<dbReference type="CDD" id="cd01283">
    <property type="entry name" value="cytidine_deaminase"/>
    <property type="match status" value="1"/>
</dbReference>
<dbReference type="FunFam" id="3.40.140.10:FF:000007">
    <property type="entry name" value="Cytidine deaminase"/>
    <property type="match status" value="1"/>
</dbReference>
<dbReference type="Gene3D" id="3.40.140.10">
    <property type="entry name" value="Cytidine Deaminase, domain 2"/>
    <property type="match status" value="2"/>
</dbReference>
<dbReference type="HAMAP" id="MF_01558">
    <property type="entry name" value="Cyt_deam"/>
    <property type="match status" value="1"/>
</dbReference>
<dbReference type="InterPro" id="IPR016192">
    <property type="entry name" value="APOBEC/CMP_deaminase_Zn-bd"/>
</dbReference>
<dbReference type="InterPro" id="IPR002125">
    <property type="entry name" value="CMP_dCMP_dom"/>
</dbReference>
<dbReference type="InterPro" id="IPR013171">
    <property type="entry name" value="Cyd/dCyd_deaminase_Zn-bd"/>
</dbReference>
<dbReference type="InterPro" id="IPR050202">
    <property type="entry name" value="Cyt/Deoxycyt_deaminase"/>
</dbReference>
<dbReference type="InterPro" id="IPR016193">
    <property type="entry name" value="Cytidine_deaminase-like"/>
</dbReference>
<dbReference type="InterPro" id="IPR020797">
    <property type="entry name" value="Cytidine_deaminase_bacteria"/>
</dbReference>
<dbReference type="NCBIfam" id="NF006537">
    <property type="entry name" value="PRK09027.1"/>
    <property type="match status" value="1"/>
</dbReference>
<dbReference type="PANTHER" id="PTHR11644">
    <property type="entry name" value="CYTIDINE DEAMINASE"/>
    <property type="match status" value="1"/>
</dbReference>
<dbReference type="PANTHER" id="PTHR11644:SF2">
    <property type="entry name" value="CYTIDINE DEAMINASE"/>
    <property type="match status" value="1"/>
</dbReference>
<dbReference type="Pfam" id="PF00383">
    <property type="entry name" value="dCMP_cyt_deam_1"/>
    <property type="match status" value="1"/>
</dbReference>
<dbReference type="Pfam" id="PF08211">
    <property type="entry name" value="dCMP_cyt_deam_2"/>
    <property type="match status" value="1"/>
</dbReference>
<dbReference type="PIRSF" id="PIRSF006334">
    <property type="entry name" value="Cdd_plus_pseudo"/>
    <property type="match status" value="1"/>
</dbReference>
<dbReference type="SUPFAM" id="SSF53927">
    <property type="entry name" value="Cytidine deaminase-like"/>
    <property type="match status" value="2"/>
</dbReference>
<dbReference type="PROSITE" id="PS00903">
    <property type="entry name" value="CYT_DCMP_DEAMINASES_1"/>
    <property type="match status" value="1"/>
</dbReference>
<dbReference type="PROSITE" id="PS51747">
    <property type="entry name" value="CYT_DCMP_DEAMINASES_2"/>
    <property type="match status" value="2"/>
</dbReference>
<accession>B0TQV3</accession>
<sequence length="296" mass="32144">MQDRFLKSIAKLPEPLATAIVPLLDKDFAGHIDAQQLEVLQIASKMELNELLLALLPIAAALARPPISEFHVGAIAKGKSGDIYMGANIELPGEALFHSVHAEQSAISHAWLSGESIIEDIIVNASPCGHCRQFINELVDGSKVKIHLPAQKIEPLAHYLPYAFGPSDLNITEPLLTKQQHTLTLDSNDPMIIEALDHAGLSYAPYTKNYASVVLETKDGATYCGRYAENAAFNPSMQPMQMALSTMARHNRDFSEINRAVLIESSKGVISLVGAAMDALHSVAVVELEHIVVEPE</sequence>
<name>CDD_SHEHH</name>
<protein>
    <recommendedName>
        <fullName evidence="1">Cytidine deaminase</fullName>
        <ecNumber evidence="1">3.5.4.5</ecNumber>
    </recommendedName>
    <alternativeName>
        <fullName evidence="1">Cytidine aminohydrolase</fullName>
        <shortName evidence="1">CDA</shortName>
    </alternativeName>
</protein>
<feature type="chain" id="PRO_1000087798" description="Cytidine deaminase">
    <location>
        <begin position="1"/>
        <end position="296"/>
    </location>
</feature>
<feature type="domain" description="CMP/dCMP-type deaminase 1" evidence="2">
    <location>
        <begin position="47"/>
        <end position="167"/>
    </location>
</feature>
<feature type="domain" description="CMP/dCMP-type deaminase 2" evidence="2">
    <location>
        <begin position="186"/>
        <end position="296"/>
    </location>
</feature>
<feature type="active site" description="Proton donor" evidence="1">
    <location>
        <position position="103"/>
    </location>
</feature>
<feature type="binding site" evidence="1">
    <location>
        <begin position="88"/>
        <end position="90"/>
    </location>
    <ligand>
        <name>substrate</name>
    </ligand>
</feature>
<feature type="binding site" evidence="1">
    <location>
        <position position="101"/>
    </location>
    <ligand>
        <name>Zn(2+)</name>
        <dbReference type="ChEBI" id="CHEBI:29105"/>
        <note>catalytic</note>
    </ligand>
</feature>
<feature type="binding site" evidence="1">
    <location>
        <position position="128"/>
    </location>
    <ligand>
        <name>Zn(2+)</name>
        <dbReference type="ChEBI" id="CHEBI:29105"/>
        <note>catalytic</note>
    </ligand>
</feature>
<feature type="binding site" evidence="1">
    <location>
        <position position="131"/>
    </location>
    <ligand>
        <name>Zn(2+)</name>
        <dbReference type="ChEBI" id="CHEBI:29105"/>
        <note>catalytic</note>
    </ligand>
</feature>
<gene>
    <name evidence="1" type="primary">cdd</name>
    <name type="ordered locus">Shal_1783</name>
</gene>
<keyword id="KW-0378">Hydrolase</keyword>
<keyword id="KW-0479">Metal-binding</keyword>
<keyword id="KW-0862">Zinc</keyword>
<reference key="1">
    <citation type="submission" date="2008-01" db="EMBL/GenBank/DDBJ databases">
        <title>Complete sequence of Shewanella halifaxensis HAW-EB4.</title>
        <authorList>
            <consortium name="US DOE Joint Genome Institute"/>
            <person name="Copeland A."/>
            <person name="Lucas S."/>
            <person name="Lapidus A."/>
            <person name="Glavina del Rio T."/>
            <person name="Dalin E."/>
            <person name="Tice H."/>
            <person name="Bruce D."/>
            <person name="Goodwin L."/>
            <person name="Pitluck S."/>
            <person name="Sims D."/>
            <person name="Brettin T."/>
            <person name="Detter J.C."/>
            <person name="Han C."/>
            <person name="Kuske C.R."/>
            <person name="Schmutz J."/>
            <person name="Larimer F."/>
            <person name="Land M."/>
            <person name="Hauser L."/>
            <person name="Kyrpides N."/>
            <person name="Kim E."/>
            <person name="Zhao J.-S."/>
            <person name="Richardson P."/>
        </authorList>
    </citation>
    <scope>NUCLEOTIDE SEQUENCE [LARGE SCALE GENOMIC DNA]</scope>
    <source>
        <strain>HAW-EB4</strain>
    </source>
</reference>
<comment type="function">
    <text evidence="1">This enzyme scavenges exogenous and endogenous cytidine and 2'-deoxycytidine for UMP synthesis.</text>
</comment>
<comment type="catalytic activity">
    <reaction evidence="1">
        <text>cytidine + H2O + H(+) = uridine + NH4(+)</text>
        <dbReference type="Rhea" id="RHEA:16069"/>
        <dbReference type="ChEBI" id="CHEBI:15377"/>
        <dbReference type="ChEBI" id="CHEBI:15378"/>
        <dbReference type="ChEBI" id="CHEBI:16704"/>
        <dbReference type="ChEBI" id="CHEBI:17562"/>
        <dbReference type="ChEBI" id="CHEBI:28938"/>
        <dbReference type="EC" id="3.5.4.5"/>
    </reaction>
</comment>
<comment type="catalytic activity">
    <reaction evidence="1">
        <text>2'-deoxycytidine + H2O + H(+) = 2'-deoxyuridine + NH4(+)</text>
        <dbReference type="Rhea" id="RHEA:13433"/>
        <dbReference type="ChEBI" id="CHEBI:15377"/>
        <dbReference type="ChEBI" id="CHEBI:15378"/>
        <dbReference type="ChEBI" id="CHEBI:15698"/>
        <dbReference type="ChEBI" id="CHEBI:16450"/>
        <dbReference type="ChEBI" id="CHEBI:28938"/>
        <dbReference type="EC" id="3.5.4.5"/>
    </reaction>
</comment>
<comment type="cofactor">
    <cofactor evidence="1">
        <name>Zn(2+)</name>
        <dbReference type="ChEBI" id="CHEBI:29105"/>
    </cofactor>
    <text evidence="1">Binds 1 zinc ion.</text>
</comment>
<comment type="subunit">
    <text evidence="1">Homodimer.</text>
</comment>
<comment type="similarity">
    <text evidence="1">Belongs to the cytidine and deoxycytidylate deaminase family.</text>
</comment>
<organism>
    <name type="scientific">Shewanella halifaxensis (strain HAW-EB4)</name>
    <dbReference type="NCBI Taxonomy" id="458817"/>
    <lineage>
        <taxon>Bacteria</taxon>
        <taxon>Pseudomonadati</taxon>
        <taxon>Pseudomonadota</taxon>
        <taxon>Gammaproteobacteria</taxon>
        <taxon>Alteromonadales</taxon>
        <taxon>Shewanellaceae</taxon>
        <taxon>Shewanella</taxon>
    </lineage>
</organism>
<evidence type="ECO:0000255" key="1">
    <source>
        <dbReference type="HAMAP-Rule" id="MF_01558"/>
    </source>
</evidence>
<evidence type="ECO:0000255" key="2">
    <source>
        <dbReference type="PROSITE-ProRule" id="PRU01083"/>
    </source>
</evidence>